<protein>
    <recommendedName>
        <fullName evidence="1">Glutaminase</fullName>
        <ecNumber evidence="1">3.5.1.2</ecNumber>
    </recommendedName>
</protein>
<reference key="1">
    <citation type="journal article" date="2005" name="Science">
        <title>Extensive DNA inversions in the B. fragilis genome control variable gene expression.</title>
        <authorList>
            <person name="Cerdeno-Tarraga A.-M."/>
            <person name="Patrick S."/>
            <person name="Crossman L.C."/>
            <person name="Blakely G."/>
            <person name="Abratt V."/>
            <person name="Lennard N."/>
            <person name="Poxton I."/>
            <person name="Duerden B."/>
            <person name="Harris B."/>
            <person name="Quail M.A."/>
            <person name="Barron A."/>
            <person name="Clark L."/>
            <person name="Corton C."/>
            <person name="Doggett J."/>
            <person name="Holden M.T.G."/>
            <person name="Larke N."/>
            <person name="Line A."/>
            <person name="Lord A."/>
            <person name="Norbertczak H."/>
            <person name="Ormond D."/>
            <person name="Price C."/>
            <person name="Rabbinowitsch E."/>
            <person name="Woodward J."/>
            <person name="Barrell B.G."/>
            <person name="Parkhill J."/>
        </authorList>
    </citation>
    <scope>NUCLEOTIDE SEQUENCE [LARGE SCALE GENOMIC DNA]</scope>
    <source>
        <strain>ATCC 25285 / DSM 2151 / CCUG 4856 / JCM 11019 / LMG 10263 / NCTC 9343 / Onslow / VPI 2553 / EN-2</strain>
    </source>
</reference>
<name>GLSA_BACFN</name>
<feature type="chain" id="PRO_1000048323" description="Glutaminase">
    <location>
        <begin position="1"/>
        <end position="321"/>
    </location>
</feature>
<feature type="binding site" evidence="1">
    <location>
        <position position="69"/>
    </location>
    <ligand>
        <name>substrate</name>
    </ligand>
</feature>
<feature type="binding site" evidence="1">
    <location>
        <position position="120"/>
    </location>
    <ligand>
        <name>substrate</name>
    </ligand>
</feature>
<feature type="binding site" evidence="1">
    <location>
        <position position="165"/>
    </location>
    <ligand>
        <name>substrate</name>
    </ligand>
</feature>
<feature type="binding site" evidence="1">
    <location>
        <position position="172"/>
    </location>
    <ligand>
        <name>substrate</name>
    </ligand>
</feature>
<feature type="binding site" evidence="1">
    <location>
        <position position="196"/>
    </location>
    <ligand>
        <name>substrate</name>
    </ligand>
</feature>
<feature type="binding site" evidence="1">
    <location>
        <position position="248"/>
    </location>
    <ligand>
        <name>substrate</name>
    </ligand>
</feature>
<feature type="binding site" evidence="1">
    <location>
        <position position="266"/>
    </location>
    <ligand>
        <name>substrate</name>
    </ligand>
</feature>
<dbReference type="EC" id="3.5.1.2" evidence="1"/>
<dbReference type="EMBL" id="CR626927">
    <property type="protein sequence ID" value="CAH06162.1"/>
    <property type="molecule type" value="Genomic_DNA"/>
</dbReference>
<dbReference type="RefSeq" id="WP_005784278.1">
    <property type="nucleotide sequence ID" value="NZ_UFTH01000001.1"/>
</dbReference>
<dbReference type="SMR" id="Q5LI65"/>
<dbReference type="PaxDb" id="272559-BF9343_0383"/>
<dbReference type="GeneID" id="60368828"/>
<dbReference type="KEGG" id="bfs:BF9343_0383"/>
<dbReference type="eggNOG" id="COG2066">
    <property type="taxonomic scope" value="Bacteria"/>
</dbReference>
<dbReference type="HOGENOM" id="CLU_027932_1_0_10"/>
<dbReference type="Proteomes" id="UP000006731">
    <property type="component" value="Chromosome"/>
</dbReference>
<dbReference type="GO" id="GO:0004359">
    <property type="term" value="F:glutaminase activity"/>
    <property type="evidence" value="ECO:0007669"/>
    <property type="project" value="UniProtKB-UniRule"/>
</dbReference>
<dbReference type="GO" id="GO:0006537">
    <property type="term" value="P:glutamate biosynthetic process"/>
    <property type="evidence" value="ECO:0007669"/>
    <property type="project" value="TreeGrafter"/>
</dbReference>
<dbReference type="GO" id="GO:0006543">
    <property type="term" value="P:glutamine catabolic process"/>
    <property type="evidence" value="ECO:0007669"/>
    <property type="project" value="TreeGrafter"/>
</dbReference>
<dbReference type="Gene3D" id="3.40.710.10">
    <property type="entry name" value="DD-peptidase/beta-lactamase superfamily"/>
    <property type="match status" value="1"/>
</dbReference>
<dbReference type="HAMAP" id="MF_00313">
    <property type="entry name" value="Glutaminase"/>
    <property type="match status" value="1"/>
</dbReference>
<dbReference type="InterPro" id="IPR012338">
    <property type="entry name" value="Beta-lactam/transpept-like"/>
</dbReference>
<dbReference type="InterPro" id="IPR015868">
    <property type="entry name" value="Glutaminase"/>
</dbReference>
<dbReference type="NCBIfam" id="TIGR03814">
    <property type="entry name" value="Gln_ase"/>
    <property type="match status" value="1"/>
</dbReference>
<dbReference type="NCBIfam" id="NF009020">
    <property type="entry name" value="PRK12356.1"/>
    <property type="match status" value="1"/>
</dbReference>
<dbReference type="PANTHER" id="PTHR12544">
    <property type="entry name" value="GLUTAMINASE"/>
    <property type="match status" value="1"/>
</dbReference>
<dbReference type="PANTHER" id="PTHR12544:SF48">
    <property type="entry name" value="GLUTAMINASE 1"/>
    <property type="match status" value="1"/>
</dbReference>
<dbReference type="Pfam" id="PF04960">
    <property type="entry name" value="Glutaminase"/>
    <property type="match status" value="1"/>
</dbReference>
<dbReference type="SUPFAM" id="SSF56601">
    <property type="entry name" value="beta-lactamase/transpeptidase-like"/>
    <property type="match status" value="1"/>
</dbReference>
<organism>
    <name type="scientific">Bacteroides fragilis (strain ATCC 25285 / DSM 2151 / CCUG 4856 / JCM 11019 / LMG 10263 / NCTC 9343 / Onslow / VPI 2553 / EN-2)</name>
    <dbReference type="NCBI Taxonomy" id="272559"/>
    <lineage>
        <taxon>Bacteria</taxon>
        <taxon>Pseudomonadati</taxon>
        <taxon>Bacteroidota</taxon>
        <taxon>Bacteroidia</taxon>
        <taxon>Bacteroidales</taxon>
        <taxon>Bacteroidaceae</taxon>
        <taxon>Bacteroides</taxon>
    </lineage>
</organism>
<gene>
    <name evidence="1" type="primary">glsA</name>
    <name type="ordered locus">BF0394</name>
</gene>
<evidence type="ECO:0000255" key="1">
    <source>
        <dbReference type="HAMAP-Rule" id="MF_00313"/>
    </source>
</evidence>
<accession>Q5LI65</accession>
<comment type="catalytic activity">
    <reaction evidence="1">
        <text>L-glutamine + H2O = L-glutamate + NH4(+)</text>
        <dbReference type="Rhea" id="RHEA:15889"/>
        <dbReference type="ChEBI" id="CHEBI:15377"/>
        <dbReference type="ChEBI" id="CHEBI:28938"/>
        <dbReference type="ChEBI" id="CHEBI:29985"/>
        <dbReference type="ChEBI" id="CHEBI:58359"/>
        <dbReference type="EC" id="3.5.1.2"/>
    </reaction>
</comment>
<comment type="subunit">
    <text evidence="1">Homotetramer.</text>
</comment>
<comment type="similarity">
    <text evidence="1">Belongs to the glutaminase family.</text>
</comment>
<keyword id="KW-0378">Hydrolase</keyword>
<proteinExistence type="inferred from homology"/>
<sequence length="321" mass="34369">MDKKISISQIKEVVQQAYEQVKGNTGGKNADYIPYLANIDKNLFGISVCLLNGQTITVGDFDYRFGIESVSKVHTAILILRQYGAQKVLEMIGADATGLPFNSIIAILLENDHPSTPLVNAGAISACSMVTPIGNSDKKWDAIVQNITDLCGSAPQLIEELYKSETATNFNNRSIAWLLKNYNRIYDDPNMSLDLYTRQCSLGVTAQMLSVAAGTVANGGVNPVTKKQVFDAELTPKITSMIATVGFYEHSGDWMYTSGIPAKTGVGGGVMGVLPGVFGVSAFAPPLDGSGNSVKAQLAIKYIMNKLGLNVFNGARVTIVD</sequence>